<reference key="1">
    <citation type="journal article" date="2008" name="Proc. Natl. Acad. Sci. U.S.A.">
        <title>Nitrogen fixation island and rhizosphere competence traits in the genome of root-associated Pseudomonas stutzeri A1501.</title>
        <authorList>
            <person name="Yan Y."/>
            <person name="Yang J."/>
            <person name="Dou Y."/>
            <person name="Chen M."/>
            <person name="Ping S."/>
            <person name="Peng J."/>
            <person name="Lu W."/>
            <person name="Zhang W."/>
            <person name="Yao Z."/>
            <person name="Li H."/>
            <person name="Liu W."/>
            <person name="He S."/>
            <person name="Geng L."/>
            <person name="Zhang X."/>
            <person name="Yang F."/>
            <person name="Yu H."/>
            <person name="Zhan Y."/>
            <person name="Li D."/>
            <person name="Lin Z."/>
            <person name="Wang Y."/>
            <person name="Elmerich C."/>
            <person name="Lin M."/>
            <person name="Jin Q."/>
        </authorList>
    </citation>
    <scope>NUCLEOTIDE SEQUENCE [LARGE SCALE GENOMIC DNA]</scope>
    <source>
        <strain>A1501</strain>
    </source>
</reference>
<protein>
    <recommendedName>
        <fullName evidence="1">Cyclic pyranopterin monophosphate synthase</fullName>
        <ecNumber evidence="1">4.6.1.17</ecNumber>
    </recommendedName>
    <alternativeName>
        <fullName evidence="1">Molybdenum cofactor biosynthesis protein C</fullName>
    </alternativeName>
</protein>
<gene>
    <name evidence="1" type="primary">moaC</name>
    <name type="ordered locus">PST_1173</name>
</gene>
<feature type="chain" id="PRO_1000054123" description="Cyclic pyranopterin monophosphate synthase">
    <location>
        <begin position="1"/>
        <end position="156"/>
    </location>
</feature>
<feature type="active site" evidence="1">
    <location>
        <position position="125"/>
    </location>
</feature>
<feature type="binding site" evidence="1">
    <location>
        <begin position="73"/>
        <end position="75"/>
    </location>
    <ligand>
        <name>substrate</name>
    </ligand>
</feature>
<feature type="binding site" evidence="1">
    <location>
        <begin position="110"/>
        <end position="111"/>
    </location>
    <ligand>
        <name>substrate</name>
    </ligand>
</feature>
<evidence type="ECO:0000255" key="1">
    <source>
        <dbReference type="HAMAP-Rule" id="MF_01224"/>
    </source>
</evidence>
<comment type="function">
    <text evidence="1">Catalyzes the conversion of (8S)-3',8-cyclo-7,8-dihydroguanosine 5'-triphosphate to cyclic pyranopterin monophosphate (cPMP).</text>
</comment>
<comment type="catalytic activity">
    <reaction evidence="1">
        <text>(8S)-3',8-cyclo-7,8-dihydroguanosine 5'-triphosphate = cyclic pyranopterin phosphate + diphosphate</text>
        <dbReference type="Rhea" id="RHEA:49580"/>
        <dbReference type="ChEBI" id="CHEBI:33019"/>
        <dbReference type="ChEBI" id="CHEBI:59648"/>
        <dbReference type="ChEBI" id="CHEBI:131766"/>
        <dbReference type="EC" id="4.6.1.17"/>
    </reaction>
</comment>
<comment type="pathway">
    <text evidence="1">Cofactor biosynthesis; molybdopterin biosynthesis.</text>
</comment>
<comment type="subunit">
    <text evidence="1">Homohexamer; trimer of dimers.</text>
</comment>
<comment type="similarity">
    <text evidence="1">Belongs to the MoaC family.</text>
</comment>
<sequence length="156" mass="16632">MLTHLDSLGRASMVDVTDKAVTAREAVAEARVRMLPQTLQLIQQGGHPKGDVFAVARIAGIQAAKKTHELIPLCHPLLLTSIKVELQADGEDSVLIRAVCKLAGQTGVEMEALTAASVAALTIYDMCKAVDRGMVIEGVRLLEKLGGKSGHWQVQA</sequence>
<proteinExistence type="inferred from homology"/>
<name>MOAC_STUS1</name>
<organism>
    <name type="scientific">Stutzerimonas stutzeri (strain A1501)</name>
    <name type="common">Pseudomonas stutzeri</name>
    <dbReference type="NCBI Taxonomy" id="379731"/>
    <lineage>
        <taxon>Bacteria</taxon>
        <taxon>Pseudomonadati</taxon>
        <taxon>Pseudomonadota</taxon>
        <taxon>Gammaproteobacteria</taxon>
        <taxon>Pseudomonadales</taxon>
        <taxon>Pseudomonadaceae</taxon>
        <taxon>Stutzerimonas</taxon>
    </lineage>
</organism>
<keyword id="KW-0456">Lyase</keyword>
<keyword id="KW-0501">Molybdenum cofactor biosynthesis</keyword>
<keyword id="KW-1185">Reference proteome</keyword>
<dbReference type="EC" id="4.6.1.17" evidence="1"/>
<dbReference type="EMBL" id="CP000304">
    <property type="protein sequence ID" value="ABP78868.1"/>
    <property type="molecule type" value="Genomic_DNA"/>
</dbReference>
<dbReference type="RefSeq" id="WP_011912355.1">
    <property type="nucleotide sequence ID" value="NC_009434.1"/>
</dbReference>
<dbReference type="SMR" id="A4VIR7"/>
<dbReference type="KEGG" id="psa:PST_1173"/>
<dbReference type="eggNOG" id="COG0315">
    <property type="taxonomic scope" value="Bacteria"/>
</dbReference>
<dbReference type="HOGENOM" id="CLU_074693_1_1_6"/>
<dbReference type="UniPathway" id="UPA00344"/>
<dbReference type="Proteomes" id="UP000000233">
    <property type="component" value="Chromosome"/>
</dbReference>
<dbReference type="GO" id="GO:0061799">
    <property type="term" value="F:cyclic pyranopterin monophosphate synthase activity"/>
    <property type="evidence" value="ECO:0007669"/>
    <property type="project" value="UniProtKB-UniRule"/>
</dbReference>
<dbReference type="GO" id="GO:0006777">
    <property type="term" value="P:Mo-molybdopterin cofactor biosynthetic process"/>
    <property type="evidence" value="ECO:0007669"/>
    <property type="project" value="UniProtKB-UniRule"/>
</dbReference>
<dbReference type="CDD" id="cd01420">
    <property type="entry name" value="MoaC_PE"/>
    <property type="match status" value="1"/>
</dbReference>
<dbReference type="FunFam" id="3.30.70.640:FF:000001">
    <property type="entry name" value="Cyclic pyranopterin monophosphate synthase"/>
    <property type="match status" value="1"/>
</dbReference>
<dbReference type="Gene3D" id="3.30.70.640">
    <property type="entry name" value="Molybdopterin cofactor biosynthesis C (MoaC) domain"/>
    <property type="match status" value="1"/>
</dbReference>
<dbReference type="HAMAP" id="MF_01224_B">
    <property type="entry name" value="MoaC_B"/>
    <property type="match status" value="1"/>
</dbReference>
<dbReference type="InterPro" id="IPR023045">
    <property type="entry name" value="MoaC"/>
</dbReference>
<dbReference type="InterPro" id="IPR047594">
    <property type="entry name" value="MoaC_bact/euk"/>
</dbReference>
<dbReference type="InterPro" id="IPR036522">
    <property type="entry name" value="MoaC_sf"/>
</dbReference>
<dbReference type="InterPro" id="IPR050105">
    <property type="entry name" value="MoCo_biosynth_MoaA/MoaC"/>
</dbReference>
<dbReference type="InterPro" id="IPR002820">
    <property type="entry name" value="Mopterin_CF_biosynth-C_dom"/>
</dbReference>
<dbReference type="NCBIfam" id="TIGR00581">
    <property type="entry name" value="moaC"/>
    <property type="match status" value="1"/>
</dbReference>
<dbReference type="NCBIfam" id="NF006870">
    <property type="entry name" value="PRK09364.1"/>
    <property type="match status" value="1"/>
</dbReference>
<dbReference type="PANTHER" id="PTHR22960:SF29">
    <property type="entry name" value="CYCLIC PYRANOPTERIN MONOPHOSPHATE SYNTHASE"/>
    <property type="match status" value="1"/>
</dbReference>
<dbReference type="PANTHER" id="PTHR22960">
    <property type="entry name" value="MOLYBDOPTERIN COFACTOR SYNTHESIS PROTEIN A"/>
    <property type="match status" value="1"/>
</dbReference>
<dbReference type="Pfam" id="PF01967">
    <property type="entry name" value="MoaC"/>
    <property type="match status" value="1"/>
</dbReference>
<dbReference type="SUPFAM" id="SSF55040">
    <property type="entry name" value="Molybdenum cofactor biosynthesis protein C, MoaC"/>
    <property type="match status" value="1"/>
</dbReference>
<accession>A4VIR7</accession>